<gene>
    <name type="primary">BRIX1</name>
    <name type="synonym">BRIX</name>
    <name type="synonym">BXDC2</name>
</gene>
<reference key="1">
    <citation type="submission" date="2005-08" db="EMBL/GenBank/DDBJ databases">
        <authorList>
            <consortium name="NIH - Mammalian Gene Collection (MGC) project"/>
        </authorList>
    </citation>
    <scope>NUCLEOTIDE SEQUENCE [LARGE SCALE MRNA]</scope>
    <source>
        <strain>Crossbred X Angus</strain>
        <tissue>Ileum</tissue>
    </source>
</reference>
<evidence type="ECO:0000250" key="1"/>
<evidence type="ECO:0000250" key="2">
    <source>
        <dbReference type="UniProtKB" id="Q8TDN6"/>
    </source>
</evidence>
<evidence type="ECO:0000255" key="3">
    <source>
        <dbReference type="PROSITE-ProRule" id="PRU00034"/>
    </source>
</evidence>
<evidence type="ECO:0000256" key="4">
    <source>
        <dbReference type="SAM" id="MobiDB-lite"/>
    </source>
</evidence>
<evidence type="ECO:0000305" key="5"/>
<protein>
    <recommendedName>
        <fullName>Ribosome biogenesis protein BRX1 homolog</fullName>
    </recommendedName>
    <alternativeName>
        <fullName>Brix domain-containing protein 2</fullName>
    </alternativeName>
</protein>
<accession>Q3SZZ0</accession>
<sequence>MAATKRKRRGGLAVQAKKLKRDAKDGKLPAKANDVSEEAAEEEKDRIPGPVCKGKWKNKERILIFSSRGINFRTRHLMQDLRMLMPHSKADTKMDRKDKLFVINEVCEMKNCNKCIYFEAKKKQDLYMWLSNSPHGPSAKFLVQNIHTLAELKMTGNCLKGSRPLLSFDPAFDELPHYALLKELLIQIFSTPRYHPKSQPFVDHVFTFTILDNRIWFRNFQIIEEDAALVEIGPRFVLNLIKIFQGSFGGPTLYENPHYQSPNMHRRVIRSITAAKYREKQQVKDVQKLRKKEPKTILPHDPTADVFVTPAEEKPVEIQWVKPEPKVDLKARKKRIYKRQRKMKQKMSSGNAK</sequence>
<organism>
    <name type="scientific">Bos taurus</name>
    <name type="common">Bovine</name>
    <dbReference type="NCBI Taxonomy" id="9913"/>
    <lineage>
        <taxon>Eukaryota</taxon>
        <taxon>Metazoa</taxon>
        <taxon>Chordata</taxon>
        <taxon>Craniata</taxon>
        <taxon>Vertebrata</taxon>
        <taxon>Euteleostomi</taxon>
        <taxon>Mammalia</taxon>
        <taxon>Eutheria</taxon>
        <taxon>Laurasiatheria</taxon>
        <taxon>Artiodactyla</taxon>
        <taxon>Ruminantia</taxon>
        <taxon>Pecora</taxon>
        <taxon>Bovidae</taxon>
        <taxon>Bovinae</taxon>
        <taxon>Bos</taxon>
    </lineage>
</organism>
<proteinExistence type="evidence at transcript level"/>
<keyword id="KW-0007">Acetylation</keyword>
<keyword id="KW-1017">Isopeptide bond</keyword>
<keyword id="KW-0539">Nucleus</keyword>
<keyword id="KW-0597">Phosphoprotein</keyword>
<keyword id="KW-1185">Reference proteome</keyword>
<keyword id="KW-0690">Ribosome biogenesis</keyword>
<keyword id="KW-0832">Ubl conjugation</keyword>
<dbReference type="EMBL" id="BC102643">
    <property type="protein sequence ID" value="AAI02644.1"/>
    <property type="molecule type" value="mRNA"/>
</dbReference>
<dbReference type="RefSeq" id="NP_001029701.1">
    <property type="nucleotide sequence ID" value="NM_001034529.2"/>
</dbReference>
<dbReference type="SMR" id="Q3SZZ0"/>
<dbReference type="FunCoup" id="Q3SZZ0">
    <property type="interactions" value="2863"/>
</dbReference>
<dbReference type="STRING" id="9913.ENSBTAP00000056776"/>
<dbReference type="PaxDb" id="9913-ENSBTAP00000025572"/>
<dbReference type="Ensembl" id="ENSBTAT00000086085.2">
    <property type="protein sequence ID" value="ENSBTAP00000056776.1"/>
    <property type="gene ID" value="ENSBTAG00000019211.4"/>
</dbReference>
<dbReference type="GeneID" id="518501"/>
<dbReference type="KEGG" id="bta:518501"/>
<dbReference type="CTD" id="55299"/>
<dbReference type="VEuPathDB" id="HostDB:ENSBTAG00000019211"/>
<dbReference type="VGNC" id="VGNC:26569">
    <property type="gene designation" value="BRIX1"/>
</dbReference>
<dbReference type="eggNOG" id="KOG2971">
    <property type="taxonomic scope" value="Eukaryota"/>
</dbReference>
<dbReference type="GeneTree" id="ENSGT00390000014467"/>
<dbReference type="HOGENOM" id="CLU_048373_2_0_1"/>
<dbReference type="InParanoid" id="Q3SZZ0"/>
<dbReference type="OMA" id="YRHRHLM"/>
<dbReference type="OrthoDB" id="1638493at2759"/>
<dbReference type="TreeFam" id="TF105766"/>
<dbReference type="CD-CODE" id="D7FE2080">
    <property type="entry name" value="Nucleolus"/>
</dbReference>
<dbReference type="Proteomes" id="UP000009136">
    <property type="component" value="Chromosome 20"/>
</dbReference>
<dbReference type="Bgee" id="ENSBTAG00000019211">
    <property type="expression patterns" value="Expressed in oocyte and 107 other cell types or tissues"/>
</dbReference>
<dbReference type="GO" id="GO:0005694">
    <property type="term" value="C:chromosome"/>
    <property type="evidence" value="ECO:0007669"/>
    <property type="project" value="Ensembl"/>
</dbReference>
<dbReference type="GO" id="GO:0005730">
    <property type="term" value="C:nucleolus"/>
    <property type="evidence" value="ECO:0000318"/>
    <property type="project" value="GO_Central"/>
</dbReference>
<dbReference type="GO" id="GO:0003723">
    <property type="term" value="F:RNA binding"/>
    <property type="evidence" value="ECO:0000318"/>
    <property type="project" value="GO_Central"/>
</dbReference>
<dbReference type="GO" id="GO:0019843">
    <property type="term" value="F:rRNA binding"/>
    <property type="evidence" value="ECO:0007669"/>
    <property type="project" value="InterPro"/>
</dbReference>
<dbReference type="GO" id="GO:0000027">
    <property type="term" value="P:ribosomal large subunit assembly"/>
    <property type="evidence" value="ECO:0000318"/>
    <property type="project" value="GO_Central"/>
</dbReference>
<dbReference type="GO" id="GO:0006364">
    <property type="term" value="P:rRNA processing"/>
    <property type="evidence" value="ECO:0007669"/>
    <property type="project" value="InterPro"/>
</dbReference>
<dbReference type="FunFam" id="3.40.50.10480:FF:000003">
    <property type="entry name" value="Ribosome biogenesis protein BRX1"/>
    <property type="match status" value="1"/>
</dbReference>
<dbReference type="Gene3D" id="3.40.50.10480">
    <property type="entry name" value="Probable brix-domain ribosomal biogenesis protein"/>
    <property type="match status" value="1"/>
</dbReference>
<dbReference type="InterPro" id="IPR007109">
    <property type="entry name" value="Brix"/>
</dbReference>
<dbReference type="InterPro" id="IPR026532">
    <property type="entry name" value="BRX1"/>
</dbReference>
<dbReference type="PANTHER" id="PTHR13634">
    <property type="entry name" value="RIBOSOME BIOGENESIS PROTEIN BRIX"/>
    <property type="match status" value="1"/>
</dbReference>
<dbReference type="PANTHER" id="PTHR13634:SF0">
    <property type="entry name" value="RIBOSOME BIOGENESIS PROTEIN BRX1 HOMOLOG"/>
    <property type="match status" value="1"/>
</dbReference>
<dbReference type="Pfam" id="PF04427">
    <property type="entry name" value="Brix"/>
    <property type="match status" value="1"/>
</dbReference>
<dbReference type="SMART" id="SM00879">
    <property type="entry name" value="Brix"/>
    <property type="match status" value="1"/>
</dbReference>
<dbReference type="SUPFAM" id="SSF52954">
    <property type="entry name" value="Class II aaRS ABD-related"/>
    <property type="match status" value="1"/>
</dbReference>
<dbReference type="PROSITE" id="PS50833">
    <property type="entry name" value="BRIX"/>
    <property type="match status" value="1"/>
</dbReference>
<comment type="function">
    <text evidence="1">Required for biogenesis of the 60S ribosomal subunit.</text>
</comment>
<comment type="subcellular location">
    <subcellularLocation>
        <location evidence="1">Nucleus</location>
        <location evidence="1">Nucleolus</location>
    </subcellularLocation>
</comment>
<comment type="similarity">
    <text evidence="5">Belongs to the BRX1 family.</text>
</comment>
<feature type="chain" id="PRO_0000269723" description="Ribosome biogenesis protein BRX1 homolog">
    <location>
        <begin position="1"/>
        <end position="353"/>
    </location>
</feature>
<feature type="domain" description="Brix" evidence="3">
    <location>
        <begin position="60"/>
        <end position="249"/>
    </location>
</feature>
<feature type="region of interest" description="Disordered" evidence="4">
    <location>
        <begin position="1"/>
        <end position="46"/>
    </location>
</feature>
<feature type="compositionally biased region" description="Basic residues" evidence="4">
    <location>
        <begin position="1"/>
        <end position="10"/>
    </location>
</feature>
<feature type="modified residue" description="Phosphoserine" evidence="2">
    <location>
        <position position="261"/>
    </location>
</feature>
<feature type="modified residue" description="N6-acetyllysine" evidence="2">
    <location>
        <position position="276"/>
    </location>
</feature>
<feature type="cross-link" description="Glycyl lysine isopeptide (Lys-Gly) (interchain with G-Cter in SUMO2)" evidence="2">
    <location>
        <position position="160"/>
    </location>
</feature>
<feature type="cross-link" description="Glycyl lysine isopeptide (Lys-Gly) (interchain with G-Cter in SUMO2)" evidence="2">
    <location>
        <position position="314"/>
    </location>
</feature>
<feature type="cross-link" description="Glycyl lysine isopeptide (Lys-Gly) (interchain with G-Cter in SUMO2)" evidence="2">
    <location>
        <position position="322"/>
    </location>
</feature>
<name>BRX1_BOVIN</name>